<reference key="1">
    <citation type="journal article" date="2003" name="Proc. Natl. Acad. Sci. U.S.A.">
        <title>Two different Swi5-containing protein complexes are involved in mating-type switching and recombination repair in fission yeast.</title>
        <authorList>
            <person name="Akamatsu Y."/>
            <person name="Dziadkowiec D."/>
            <person name="Ikeguchi M."/>
            <person name="Shinagawa H."/>
            <person name="Iwasaki H."/>
        </authorList>
    </citation>
    <scope>NUCLEOTIDE SEQUENCE [GENOMIC DNA]</scope>
    <scope>FUNCTION</scope>
    <scope>INTERACTION WITH SWI5 AND RHP51</scope>
</reference>
<reference key="2">
    <citation type="submission" date="2003-04" db="EMBL/GenBank/DDBJ databases">
        <title>dds20+ is a novel S. pombe gene involved in DNA double-strand break repair.</title>
        <authorList>
            <person name="Bashkirov V.I."/>
            <person name="Khasanov F.K."/>
            <person name="Savchenko G.V."/>
        </authorList>
    </citation>
    <scope>NUCLEOTIDE SEQUENCE [MRNA]</scope>
</reference>
<reference key="3">
    <citation type="submission" date="1996-03" db="EMBL/GenBank/DDBJ databases">
        <title>S.pombe chromosome II cosmid 1228 sequence.</title>
        <authorList>
            <person name="Kohnosu A."/>
            <person name="Niwa O."/>
            <person name="Yano M."/>
            <person name="Saitoh S."/>
            <person name="Katayama T."/>
            <person name="Nagao K."/>
            <person name="Yanagida M."/>
        </authorList>
    </citation>
    <scope>NUCLEOTIDE SEQUENCE [GENOMIC DNA]</scope>
    <source>
        <strain>972 / ATCC 24843</strain>
    </source>
</reference>
<reference key="4">
    <citation type="journal article" date="2002" name="Nature">
        <title>The genome sequence of Schizosaccharomyces pombe.</title>
        <authorList>
            <person name="Wood V."/>
            <person name="Gwilliam R."/>
            <person name="Rajandream M.A."/>
            <person name="Lyne M.H."/>
            <person name="Lyne R."/>
            <person name="Stewart A."/>
            <person name="Sgouros J.G."/>
            <person name="Peat N."/>
            <person name="Hayles J."/>
            <person name="Baker S.G."/>
            <person name="Basham D."/>
            <person name="Bowman S."/>
            <person name="Brooks K."/>
            <person name="Brown D."/>
            <person name="Brown S."/>
            <person name="Chillingworth T."/>
            <person name="Churcher C.M."/>
            <person name="Collins M."/>
            <person name="Connor R."/>
            <person name="Cronin A."/>
            <person name="Davis P."/>
            <person name="Feltwell T."/>
            <person name="Fraser A."/>
            <person name="Gentles S."/>
            <person name="Goble A."/>
            <person name="Hamlin N."/>
            <person name="Harris D.E."/>
            <person name="Hidalgo J."/>
            <person name="Hodgson G."/>
            <person name="Holroyd S."/>
            <person name="Hornsby T."/>
            <person name="Howarth S."/>
            <person name="Huckle E.J."/>
            <person name="Hunt S."/>
            <person name="Jagels K."/>
            <person name="James K.D."/>
            <person name="Jones L."/>
            <person name="Jones M."/>
            <person name="Leather S."/>
            <person name="McDonald S."/>
            <person name="McLean J."/>
            <person name="Mooney P."/>
            <person name="Moule S."/>
            <person name="Mungall K.L."/>
            <person name="Murphy L.D."/>
            <person name="Niblett D."/>
            <person name="Odell C."/>
            <person name="Oliver K."/>
            <person name="O'Neil S."/>
            <person name="Pearson D."/>
            <person name="Quail M.A."/>
            <person name="Rabbinowitsch E."/>
            <person name="Rutherford K.M."/>
            <person name="Rutter S."/>
            <person name="Saunders D."/>
            <person name="Seeger K."/>
            <person name="Sharp S."/>
            <person name="Skelton J."/>
            <person name="Simmonds M.N."/>
            <person name="Squares R."/>
            <person name="Squares S."/>
            <person name="Stevens K."/>
            <person name="Taylor K."/>
            <person name="Taylor R.G."/>
            <person name="Tivey A."/>
            <person name="Walsh S.V."/>
            <person name="Warren T."/>
            <person name="Whitehead S."/>
            <person name="Woodward J.R."/>
            <person name="Volckaert G."/>
            <person name="Aert R."/>
            <person name="Robben J."/>
            <person name="Grymonprez B."/>
            <person name="Weltjens I."/>
            <person name="Vanstreels E."/>
            <person name="Rieger M."/>
            <person name="Schaefer M."/>
            <person name="Mueller-Auer S."/>
            <person name="Gabel C."/>
            <person name="Fuchs M."/>
            <person name="Duesterhoeft A."/>
            <person name="Fritzc C."/>
            <person name="Holzer E."/>
            <person name="Moestl D."/>
            <person name="Hilbert H."/>
            <person name="Borzym K."/>
            <person name="Langer I."/>
            <person name="Beck A."/>
            <person name="Lehrach H."/>
            <person name="Reinhardt R."/>
            <person name="Pohl T.M."/>
            <person name="Eger P."/>
            <person name="Zimmermann W."/>
            <person name="Wedler H."/>
            <person name="Wambutt R."/>
            <person name="Purnelle B."/>
            <person name="Goffeau A."/>
            <person name="Cadieu E."/>
            <person name="Dreano S."/>
            <person name="Gloux S."/>
            <person name="Lelaure V."/>
            <person name="Mottier S."/>
            <person name="Galibert F."/>
            <person name="Aves S.J."/>
            <person name="Xiang Z."/>
            <person name="Hunt C."/>
            <person name="Moore K."/>
            <person name="Hurst S.M."/>
            <person name="Lucas M."/>
            <person name="Rochet M."/>
            <person name="Gaillardin C."/>
            <person name="Tallada V.A."/>
            <person name="Garzon A."/>
            <person name="Thode G."/>
            <person name="Daga R.R."/>
            <person name="Cruzado L."/>
            <person name="Jimenez J."/>
            <person name="Sanchez M."/>
            <person name="del Rey F."/>
            <person name="Benito J."/>
            <person name="Dominguez A."/>
            <person name="Revuelta J.L."/>
            <person name="Moreno S."/>
            <person name="Armstrong J."/>
            <person name="Forsburg S.L."/>
            <person name="Cerutti L."/>
            <person name="Lowe T."/>
            <person name="McCombie W.R."/>
            <person name="Paulsen I."/>
            <person name="Potashkin J."/>
            <person name="Shpakovski G.V."/>
            <person name="Ussery D."/>
            <person name="Barrell B.G."/>
            <person name="Nurse P."/>
        </authorList>
    </citation>
    <scope>NUCLEOTIDE SEQUENCE [LARGE SCALE GENOMIC DNA]</scope>
    <source>
        <strain>972 / ATCC 24843</strain>
    </source>
</reference>
<reference key="5">
    <citation type="journal article" date="2005" name="Curr. Biol.">
        <title>A large-scale screen in S. pombe identifies seven novel genes required for critical meiotic events.</title>
        <authorList>
            <person name="Martin-Castellanos C."/>
            <person name="Blanco M."/>
            <person name="Rozalen A.E."/>
            <person name="Perez-Hidalgo L."/>
            <person name="Garcia A.I."/>
            <person name="Conde F."/>
            <person name="Mata J."/>
            <person name="Ellermeier C."/>
            <person name="Davis L."/>
            <person name="San-Segundo P."/>
            <person name="Smith G.R."/>
            <person name="Moreno S."/>
        </authorList>
    </citation>
    <scope>FUNCTION IN MEIOSIS</scope>
</reference>
<reference key="6">
    <citation type="journal article" date="2006" name="Nat. Biotechnol.">
        <title>ORFeome cloning and global analysis of protein localization in the fission yeast Schizosaccharomyces pombe.</title>
        <authorList>
            <person name="Matsuyama A."/>
            <person name="Arai R."/>
            <person name="Yashiroda Y."/>
            <person name="Shirai A."/>
            <person name="Kamata A."/>
            <person name="Sekido S."/>
            <person name="Kobayashi Y."/>
            <person name="Hashimoto A."/>
            <person name="Hamamoto M."/>
            <person name="Hiraoka Y."/>
            <person name="Horinouchi S."/>
            <person name="Yoshida M."/>
        </authorList>
    </citation>
    <scope>SUBCELLULAR LOCATION [LARGE SCALE ANALYSIS]</scope>
</reference>
<dbReference type="EMBL" id="AB089500">
    <property type="protein sequence ID" value="BAC77073.1"/>
    <property type="molecule type" value="Genomic_DNA"/>
</dbReference>
<dbReference type="EMBL" id="AY275538">
    <property type="protein sequence ID" value="AAQ19997.1"/>
    <property type="molecule type" value="mRNA"/>
</dbReference>
<dbReference type="EMBL" id="D83992">
    <property type="protein sequence ID" value="BAA12180.1"/>
    <property type="molecule type" value="Genomic_DNA"/>
</dbReference>
<dbReference type="EMBL" id="CU329671">
    <property type="protein sequence ID" value="CAB57936.1"/>
    <property type="molecule type" value="Genomic_DNA"/>
</dbReference>
<dbReference type="PIR" id="T40050">
    <property type="entry name" value="T40050"/>
</dbReference>
<dbReference type="RefSeq" id="NP_595668.1">
    <property type="nucleotide sequence ID" value="NM_001021563.2"/>
</dbReference>
<dbReference type="PDB" id="3VIQ">
    <property type="method" value="X-ray"/>
    <property type="resolution" value="2.20 A"/>
    <property type="chains" value="A/C=181-299"/>
</dbReference>
<dbReference type="PDBsum" id="3VIQ"/>
<dbReference type="SMR" id="Q9USV1"/>
<dbReference type="BioGRID" id="277110">
    <property type="interactions" value="30"/>
</dbReference>
<dbReference type="ComplexPortal" id="CPX-8094">
    <property type="entry name" value="SWI5-SFR1 recombination accessory factor complex"/>
</dbReference>
<dbReference type="DIP" id="DIP-29234N"/>
<dbReference type="FunCoup" id="Q9USV1">
    <property type="interactions" value="88"/>
</dbReference>
<dbReference type="IntAct" id="Q9USV1">
    <property type="interactions" value="74"/>
</dbReference>
<dbReference type="STRING" id="284812.Q9USV1"/>
<dbReference type="iPTMnet" id="Q9USV1"/>
<dbReference type="PaxDb" id="4896-SPBC28F2.07.1"/>
<dbReference type="EnsemblFungi" id="SPBC28F2.07.1">
    <property type="protein sequence ID" value="SPBC28F2.07.1:pep"/>
    <property type="gene ID" value="SPBC28F2.07"/>
</dbReference>
<dbReference type="GeneID" id="2540584"/>
<dbReference type="KEGG" id="spo:2540584"/>
<dbReference type="PomBase" id="SPBC28F2.07">
    <property type="gene designation" value="sfr1"/>
</dbReference>
<dbReference type="VEuPathDB" id="FungiDB:SPBC28F2.07"/>
<dbReference type="eggNOG" id="ENOG502SAMI">
    <property type="taxonomic scope" value="Eukaryota"/>
</dbReference>
<dbReference type="HOGENOM" id="CLU_082817_0_0_1"/>
<dbReference type="InParanoid" id="Q9USV1"/>
<dbReference type="OMA" id="KWRGVAQ"/>
<dbReference type="PhylomeDB" id="Q9USV1"/>
<dbReference type="EvolutionaryTrace" id="Q9USV1"/>
<dbReference type="PRO" id="PR:Q9USV1"/>
<dbReference type="Proteomes" id="UP000002485">
    <property type="component" value="Chromosome II"/>
</dbReference>
<dbReference type="GO" id="GO:0005829">
    <property type="term" value="C:cytosol"/>
    <property type="evidence" value="ECO:0007005"/>
    <property type="project" value="PomBase"/>
</dbReference>
<dbReference type="GO" id="GO:0031934">
    <property type="term" value="C:mating-type region heterochromatin"/>
    <property type="evidence" value="ECO:0000314"/>
    <property type="project" value="PomBase"/>
</dbReference>
<dbReference type="GO" id="GO:0005634">
    <property type="term" value="C:nucleus"/>
    <property type="evidence" value="ECO:0000314"/>
    <property type="project" value="PomBase"/>
</dbReference>
<dbReference type="GO" id="GO:0035861">
    <property type="term" value="C:site of double-strand break"/>
    <property type="evidence" value="ECO:0000314"/>
    <property type="project" value="PomBase"/>
</dbReference>
<dbReference type="GO" id="GO:0032798">
    <property type="term" value="C:Swi5-Sfr1 complex"/>
    <property type="evidence" value="ECO:0000314"/>
    <property type="project" value="PomBase"/>
</dbReference>
<dbReference type="GO" id="GO:0001671">
    <property type="term" value="F:ATPase activator activity"/>
    <property type="evidence" value="ECO:0000314"/>
    <property type="project" value="PomBase"/>
</dbReference>
<dbReference type="GO" id="GO:0003690">
    <property type="term" value="F:double-stranded DNA binding"/>
    <property type="evidence" value="ECO:0000314"/>
    <property type="project" value="PomBase"/>
</dbReference>
<dbReference type="GO" id="GO:0003697">
    <property type="term" value="F:single-stranded DNA binding"/>
    <property type="evidence" value="ECO:0000314"/>
    <property type="project" value="PomBase"/>
</dbReference>
<dbReference type="GO" id="GO:0007059">
    <property type="term" value="P:chromosome segregation"/>
    <property type="evidence" value="ECO:0007669"/>
    <property type="project" value="UniProtKB-KW"/>
</dbReference>
<dbReference type="GO" id="GO:0000730">
    <property type="term" value="P:DNA recombinase assembly"/>
    <property type="evidence" value="ECO:0000314"/>
    <property type="project" value="PomBase"/>
</dbReference>
<dbReference type="GO" id="GO:0006310">
    <property type="term" value="P:DNA recombination"/>
    <property type="evidence" value="ECO:0000314"/>
    <property type="project" value="PomBase"/>
</dbReference>
<dbReference type="GO" id="GO:0042148">
    <property type="term" value="P:DNA strand invasion"/>
    <property type="evidence" value="ECO:0000314"/>
    <property type="project" value="PomBase"/>
</dbReference>
<dbReference type="GO" id="GO:1990918">
    <property type="term" value="P:double-strand break repair involved in meiotic recombination"/>
    <property type="evidence" value="ECO:0000315"/>
    <property type="project" value="PomBase"/>
</dbReference>
<dbReference type="GO" id="GO:0000724">
    <property type="term" value="P:double-strand break repair via homologous recombination"/>
    <property type="evidence" value="ECO:0000316"/>
    <property type="project" value="PomBase"/>
</dbReference>
<dbReference type="GO" id="GO:0010772">
    <property type="term" value="P:meiotic DNA recombinase assembly involved in reciprocal meiotic recombination"/>
    <property type="evidence" value="ECO:0000314"/>
    <property type="project" value="PomBase"/>
</dbReference>
<dbReference type="GO" id="GO:0000709">
    <property type="term" value="P:meiotic joint molecule formation"/>
    <property type="evidence" value="ECO:0000314"/>
    <property type="project" value="PomBase"/>
</dbReference>
<dbReference type="GO" id="GO:0000708">
    <property type="term" value="P:meiotic strand invasion"/>
    <property type="evidence" value="ECO:0000314"/>
    <property type="project" value="PomBase"/>
</dbReference>
<dbReference type="GO" id="GO:0031573">
    <property type="term" value="P:mitotic intra-S DNA damage checkpoint signaling"/>
    <property type="evidence" value="ECO:0000315"/>
    <property type="project" value="PomBase"/>
</dbReference>
<dbReference type="GO" id="GO:0007131">
    <property type="term" value="P:reciprocal meiotic recombination"/>
    <property type="evidence" value="ECO:0000315"/>
    <property type="project" value="PomBase"/>
</dbReference>
<dbReference type="Gene3D" id="6.10.140.1020">
    <property type="match status" value="1"/>
</dbReference>
<dbReference type="IDEAL" id="IID50104"/>
<dbReference type="InterPro" id="IPR018468">
    <property type="entry name" value="SFR1/Mei5"/>
</dbReference>
<dbReference type="PANTHER" id="PTHR28527">
    <property type="entry name" value="MATING-TYPE SWITCHING PROTEIN SWI2-RELATED"/>
    <property type="match status" value="1"/>
</dbReference>
<dbReference type="PANTHER" id="PTHR28527:SF1">
    <property type="entry name" value="SWI5-DEPENDENT RECOMBINATION DNA REPAIR PROTEIN 1"/>
    <property type="match status" value="1"/>
</dbReference>
<dbReference type="Pfam" id="PF10376">
    <property type="entry name" value="Mei5"/>
    <property type="match status" value="1"/>
</dbReference>
<evidence type="ECO:0000255" key="1"/>
<evidence type="ECO:0000256" key="2">
    <source>
        <dbReference type="SAM" id="MobiDB-lite"/>
    </source>
</evidence>
<evidence type="ECO:0000269" key="3">
    <source>
    </source>
</evidence>
<evidence type="ECO:0000269" key="4">
    <source>
    </source>
</evidence>
<evidence type="ECO:0000269" key="5">
    <source>
    </source>
</evidence>
<evidence type="ECO:0000305" key="6"/>
<evidence type="ECO:0007829" key="7">
    <source>
        <dbReference type="PDB" id="3VIQ"/>
    </source>
</evidence>
<comment type="function">
    <text evidence="3 4">Involved in DNA recombination repair and meiotic chromosome segregation.</text>
</comment>
<comment type="subunit">
    <text evidence="3">Interacts with swi5 and rhp51.</text>
</comment>
<comment type="interaction">
    <interactant intactId="EBI-927233">
        <id>Q9USV1</id>
    </interactant>
    <interactant intactId="EBI-926960">
        <id>P36601</id>
        <label>rhp51</label>
    </interactant>
    <organismsDiffer>false</organismsDiffer>
    <experiments>6</experiments>
</comment>
<comment type="interaction">
    <interactant intactId="EBI-927233">
        <id>Q9USV1</id>
    </interactant>
    <interactant intactId="EBI-926902">
        <id>Q9UUB7</id>
        <label>swi5</label>
    </interactant>
    <organismsDiffer>false</organismsDiffer>
    <experiments>17</experiments>
</comment>
<comment type="subcellular location">
    <subcellularLocation>
        <location evidence="5">Cytoplasm</location>
    </subcellularLocation>
    <subcellularLocation>
        <location evidence="5">Nucleus</location>
    </subcellularLocation>
</comment>
<comment type="similarity">
    <text evidence="6">Belongs to the SFR1/MEI5 family.</text>
</comment>
<proteinExistence type="evidence at protein level"/>
<protein>
    <recommendedName>
        <fullName>Swi5-dependent recombination DNA repair protein 1</fullName>
    </recommendedName>
    <alternativeName>
        <fullName>DNA repair protein dds20</fullName>
    </alternativeName>
    <alternativeName>
        <fullName>Meiotically up-regulated gene 13 protein</fullName>
    </alternativeName>
</protein>
<accession>Q9USV1</accession>
<accession>P78932</accession>
<organism>
    <name type="scientific">Schizosaccharomyces pombe (strain 972 / ATCC 24843)</name>
    <name type="common">Fission yeast</name>
    <dbReference type="NCBI Taxonomy" id="284812"/>
    <lineage>
        <taxon>Eukaryota</taxon>
        <taxon>Fungi</taxon>
        <taxon>Dikarya</taxon>
        <taxon>Ascomycota</taxon>
        <taxon>Taphrinomycotina</taxon>
        <taxon>Schizosaccharomycetes</taxon>
        <taxon>Schizosaccharomycetales</taxon>
        <taxon>Schizosaccharomycetaceae</taxon>
        <taxon>Schizosaccharomyces</taxon>
    </lineage>
</organism>
<feature type="chain" id="PRO_0000097710" description="Swi5-dependent recombination DNA repair protein 1">
    <location>
        <begin position="1"/>
        <end position="299"/>
    </location>
</feature>
<feature type="region of interest" description="Disordered" evidence="2">
    <location>
        <begin position="1"/>
        <end position="52"/>
    </location>
</feature>
<feature type="region of interest" description="Disordered" evidence="2">
    <location>
        <begin position="132"/>
        <end position="152"/>
    </location>
</feature>
<feature type="coiled-coil region" evidence="1">
    <location>
        <begin position="177"/>
        <end position="236"/>
    </location>
</feature>
<feature type="compositionally biased region" description="Polar residues" evidence="2">
    <location>
        <begin position="1"/>
        <end position="16"/>
    </location>
</feature>
<feature type="compositionally biased region" description="Basic and acidic residues" evidence="2">
    <location>
        <begin position="17"/>
        <end position="32"/>
    </location>
</feature>
<feature type="sequence conflict" description="In Ref. 3; BAA12180." evidence="6" ref="3">
    <original>Q</original>
    <variation>H</variation>
    <location>
        <position position="3"/>
    </location>
</feature>
<feature type="sequence conflict" description="In Ref. 3; BAA12180." evidence="6" ref="3">
    <original>K</original>
    <variation>Q</variation>
    <location>
        <position position="80"/>
    </location>
</feature>
<feature type="sequence conflict" description="In Ref. 3; BAA12180." evidence="6" ref="3">
    <original>N</original>
    <variation>T</variation>
    <location>
        <position position="172"/>
    </location>
</feature>
<feature type="sequence conflict" description="In Ref. 3." evidence="6" ref="3">
    <original>VEAKNE</original>
    <variation>GGTKNG</variation>
    <location>
        <begin position="209"/>
        <end position="214"/>
    </location>
</feature>
<feature type="sequence conflict" description="In Ref. 3." evidence="6" ref="3">
    <location>
        <begin position="216"/>
        <end position="299"/>
    </location>
</feature>
<feature type="helix" evidence="7">
    <location>
        <begin position="181"/>
        <end position="212"/>
    </location>
</feature>
<feature type="helix" evidence="7">
    <location>
        <begin position="215"/>
        <end position="245"/>
    </location>
</feature>
<feature type="turn" evidence="7">
    <location>
        <begin position="246"/>
        <end position="248"/>
    </location>
</feature>
<feature type="strand" evidence="7">
    <location>
        <begin position="250"/>
        <end position="255"/>
    </location>
</feature>
<feature type="turn" evidence="7">
    <location>
        <begin position="260"/>
        <end position="263"/>
    </location>
</feature>
<feature type="strand" evidence="7">
    <location>
        <begin position="265"/>
        <end position="270"/>
    </location>
</feature>
<feature type="helix" evidence="7">
    <location>
        <begin position="274"/>
        <end position="280"/>
    </location>
</feature>
<feature type="turn" evidence="7">
    <location>
        <begin position="285"/>
        <end position="287"/>
    </location>
</feature>
<feature type="turn" evidence="7">
    <location>
        <begin position="292"/>
        <end position="295"/>
    </location>
</feature>
<gene>
    <name type="primary">sfr1</name>
    <name type="synonym">dds20</name>
    <name type="synonym">mug13</name>
    <name type="ORF">SPBC28F2.07</name>
</gene>
<sequence length="299" mass="33638">MSQTINSELNENATSQCKEDLKVSLSESDLRDSQGQLGIENPPKCNNSGNHSDNLGFIEQSETVHPENEKALTPDLRDTKIHTSLPITTPFSKKRAREAKNILLKPFKSPLRQTASPQVADTNLKPSLAVTNLNSDETNTSSEPVTSPLRTTPNSIKRQKRLFKSPISNCLNPKSDPEITQLLSRRLKLEKEVRNLQEQLITAETARKVEAKNEDKDLQTLIQKWKNAAQQAAEVLFKPMAERIRLAGGVTQSFRIEEGENKGQIQEVRTEFTMSMFLNQFGVPVHLMSFDEENGDWKS</sequence>
<name>SFR1_SCHPO</name>
<keyword id="KW-0002">3D-structure</keyword>
<keyword id="KW-0159">Chromosome partition</keyword>
<keyword id="KW-0175">Coiled coil</keyword>
<keyword id="KW-0963">Cytoplasm</keyword>
<keyword id="KW-0227">DNA damage</keyword>
<keyword id="KW-0234">DNA repair</keyword>
<keyword id="KW-0469">Meiosis</keyword>
<keyword id="KW-0539">Nucleus</keyword>
<keyword id="KW-1185">Reference proteome</keyword>